<dbReference type="EC" id="2.7.1.16" evidence="1"/>
<dbReference type="EMBL" id="CP000026">
    <property type="protein sequence ID" value="AAV76138.1"/>
    <property type="molecule type" value="Genomic_DNA"/>
</dbReference>
<dbReference type="RefSeq" id="WP_000951819.1">
    <property type="nucleotide sequence ID" value="NC_006511.1"/>
</dbReference>
<dbReference type="SMR" id="Q5PDF1"/>
<dbReference type="KEGG" id="spt:SPA0105"/>
<dbReference type="HOGENOM" id="CLU_009281_9_1_6"/>
<dbReference type="UniPathway" id="UPA00145">
    <property type="reaction ID" value="UER00566"/>
</dbReference>
<dbReference type="Proteomes" id="UP000008185">
    <property type="component" value="Chromosome"/>
</dbReference>
<dbReference type="GO" id="GO:0005737">
    <property type="term" value="C:cytoplasm"/>
    <property type="evidence" value="ECO:0007669"/>
    <property type="project" value="TreeGrafter"/>
</dbReference>
<dbReference type="GO" id="GO:0005524">
    <property type="term" value="F:ATP binding"/>
    <property type="evidence" value="ECO:0007669"/>
    <property type="project" value="UniProtKB-KW"/>
</dbReference>
<dbReference type="GO" id="GO:0019150">
    <property type="term" value="F:D-ribulokinase activity"/>
    <property type="evidence" value="ECO:0007669"/>
    <property type="project" value="RHEA"/>
</dbReference>
<dbReference type="GO" id="GO:0008741">
    <property type="term" value="F:ribulokinase activity"/>
    <property type="evidence" value="ECO:0007669"/>
    <property type="project" value="UniProtKB-UniRule"/>
</dbReference>
<dbReference type="GO" id="GO:0019569">
    <property type="term" value="P:L-arabinose catabolic process to xylulose 5-phosphate"/>
    <property type="evidence" value="ECO:0007669"/>
    <property type="project" value="UniProtKB-UniRule"/>
</dbReference>
<dbReference type="CDD" id="cd07781">
    <property type="entry name" value="ASKHA_NBD_FGGY_L-RBK"/>
    <property type="match status" value="1"/>
</dbReference>
<dbReference type="Gene3D" id="1.20.58.2240">
    <property type="match status" value="1"/>
</dbReference>
<dbReference type="Gene3D" id="3.30.420.40">
    <property type="match status" value="1"/>
</dbReference>
<dbReference type="HAMAP" id="MF_00520">
    <property type="entry name" value="Ribulokinase"/>
    <property type="match status" value="1"/>
</dbReference>
<dbReference type="InterPro" id="IPR043129">
    <property type="entry name" value="ATPase_NBD"/>
</dbReference>
<dbReference type="InterPro" id="IPR018485">
    <property type="entry name" value="FGGY_C"/>
</dbReference>
<dbReference type="InterPro" id="IPR005929">
    <property type="entry name" value="Ribulokinase"/>
</dbReference>
<dbReference type="NCBIfam" id="TIGR01234">
    <property type="entry name" value="L-ribulokinase"/>
    <property type="match status" value="1"/>
</dbReference>
<dbReference type="NCBIfam" id="NF003154">
    <property type="entry name" value="PRK04123.1"/>
    <property type="match status" value="1"/>
</dbReference>
<dbReference type="PANTHER" id="PTHR43435:SF4">
    <property type="entry name" value="FGGY CARBOHYDRATE KINASE DOMAIN-CONTAINING PROTEIN"/>
    <property type="match status" value="1"/>
</dbReference>
<dbReference type="PANTHER" id="PTHR43435">
    <property type="entry name" value="RIBULOKINASE"/>
    <property type="match status" value="1"/>
</dbReference>
<dbReference type="Pfam" id="PF02782">
    <property type="entry name" value="FGGY_C"/>
    <property type="match status" value="1"/>
</dbReference>
<dbReference type="SUPFAM" id="SSF53067">
    <property type="entry name" value="Actin-like ATPase domain"/>
    <property type="match status" value="2"/>
</dbReference>
<proteinExistence type="inferred from homology"/>
<accession>Q5PDF1</accession>
<sequence>MAIAIGLDFGSDSVRALAVDCATGDEIATSVEWYPRWQEGRYCDGPNNQFRHHPRDYMESMEAALKAVLAQLSAAQRANVVGIGVDSTGSTPAPIDADGNVLALRPEFAENPNAMFVLWKDHTAVEEADEITRLCHKPGKVDYSRYIGGIYSSEWFWAKILHVTRQDSAVAQAAVSWIELCDWVPALLSGTTRPQDIRRGRCSAGHKTLWHESWGGLPPASFFDELDPCINRHLRYPLFSETFTADLPVGTLCAEWAQRLGLPESVVISGGAFDCHMGAVGAGAQPNTLVKVIGTSTCDILIADKQSVGDRAVKGICGQVDGSVVPNFIGLEAGQSAFGDIYAWFSRVLSWPLEQLAAQHPELKTQINASQKQLLPALTDAWAKNPSLDHLPVVLDWFNGRRTPNANQRLKGVITDLNLATDAPALFGGLVASTAFGARAIQECFTEQGIAVNNVMALGGIARKNQVIMQVCCDVLNRPLQIVASDQCCALGAAIFAAVAAKVHADIPAAQQSMASAVERTLRPRPEQAQRFERLYRRYQQWALSAEQHYLPTAAPAPTTPANQAILTH</sequence>
<comment type="catalytic activity">
    <reaction evidence="1">
        <text>D-ribulose + ATP = D-ribulose 5-phosphate + ADP + H(+)</text>
        <dbReference type="Rhea" id="RHEA:17601"/>
        <dbReference type="ChEBI" id="CHEBI:15378"/>
        <dbReference type="ChEBI" id="CHEBI:17173"/>
        <dbReference type="ChEBI" id="CHEBI:30616"/>
        <dbReference type="ChEBI" id="CHEBI:58121"/>
        <dbReference type="ChEBI" id="CHEBI:456216"/>
        <dbReference type="EC" id="2.7.1.16"/>
    </reaction>
</comment>
<comment type="catalytic activity">
    <reaction evidence="1">
        <text>L-ribulose + ATP = L-ribulose 5-phosphate + ADP + H(+)</text>
        <dbReference type="Rhea" id="RHEA:22072"/>
        <dbReference type="ChEBI" id="CHEBI:15378"/>
        <dbReference type="ChEBI" id="CHEBI:16880"/>
        <dbReference type="ChEBI" id="CHEBI:30616"/>
        <dbReference type="ChEBI" id="CHEBI:58226"/>
        <dbReference type="ChEBI" id="CHEBI:456216"/>
        <dbReference type="EC" id="2.7.1.16"/>
    </reaction>
</comment>
<comment type="pathway">
    <text evidence="1">Carbohydrate degradation; L-arabinose degradation via L-ribulose; D-xylulose 5-phosphate from L-arabinose (bacterial route): step 2/3.</text>
</comment>
<comment type="similarity">
    <text evidence="1">Belongs to the ribulokinase family.</text>
</comment>
<gene>
    <name evidence="1" type="primary">araB</name>
    <name type="ordered locus">SPA0105</name>
</gene>
<reference key="1">
    <citation type="journal article" date="2004" name="Nat. Genet.">
        <title>Comparison of genome degradation in Paratyphi A and Typhi, human-restricted serovars of Salmonella enterica that cause typhoid.</title>
        <authorList>
            <person name="McClelland M."/>
            <person name="Sanderson K.E."/>
            <person name="Clifton S.W."/>
            <person name="Latreille P."/>
            <person name="Porwollik S."/>
            <person name="Sabo A."/>
            <person name="Meyer R."/>
            <person name="Bieri T."/>
            <person name="Ozersky P."/>
            <person name="McLellan M."/>
            <person name="Harkins C.R."/>
            <person name="Wang C."/>
            <person name="Nguyen C."/>
            <person name="Berghoff A."/>
            <person name="Elliott G."/>
            <person name="Kohlberg S."/>
            <person name="Strong C."/>
            <person name="Du F."/>
            <person name="Carter J."/>
            <person name="Kremizki C."/>
            <person name="Layman D."/>
            <person name="Leonard S."/>
            <person name="Sun H."/>
            <person name="Fulton L."/>
            <person name="Nash W."/>
            <person name="Miner T."/>
            <person name="Minx P."/>
            <person name="Delehaunty K."/>
            <person name="Fronick C."/>
            <person name="Magrini V."/>
            <person name="Nhan M."/>
            <person name="Warren W."/>
            <person name="Florea L."/>
            <person name="Spieth J."/>
            <person name="Wilson R.K."/>
        </authorList>
    </citation>
    <scope>NUCLEOTIDE SEQUENCE [LARGE SCALE GENOMIC DNA]</scope>
    <source>
        <strain>ATCC 9150 / SARB42</strain>
    </source>
</reference>
<organism>
    <name type="scientific">Salmonella paratyphi A (strain ATCC 9150 / SARB42)</name>
    <dbReference type="NCBI Taxonomy" id="295319"/>
    <lineage>
        <taxon>Bacteria</taxon>
        <taxon>Pseudomonadati</taxon>
        <taxon>Pseudomonadota</taxon>
        <taxon>Gammaproteobacteria</taxon>
        <taxon>Enterobacterales</taxon>
        <taxon>Enterobacteriaceae</taxon>
        <taxon>Salmonella</taxon>
    </lineage>
</organism>
<protein>
    <recommendedName>
        <fullName evidence="1">Ribulokinase</fullName>
        <ecNumber evidence="1">2.7.1.16</ecNumber>
    </recommendedName>
</protein>
<keyword id="KW-0054">Arabinose catabolism</keyword>
<keyword id="KW-0067">ATP-binding</keyword>
<keyword id="KW-0119">Carbohydrate metabolism</keyword>
<keyword id="KW-0418">Kinase</keyword>
<keyword id="KW-0547">Nucleotide-binding</keyword>
<keyword id="KW-0808">Transferase</keyword>
<name>ARAB_SALPA</name>
<evidence type="ECO:0000255" key="1">
    <source>
        <dbReference type="HAMAP-Rule" id="MF_00520"/>
    </source>
</evidence>
<feature type="chain" id="PRO_0000263403" description="Ribulokinase">
    <location>
        <begin position="1"/>
        <end position="569"/>
    </location>
</feature>